<geneLocation type="chloroplast"/>
<keyword id="KW-0150">Chloroplast</keyword>
<keyword id="KW-0472">Membrane</keyword>
<keyword id="KW-0934">Plastid</keyword>
<keyword id="KW-0812">Transmembrane</keyword>
<keyword id="KW-1133">Transmembrane helix</keyword>
<reference key="1">
    <citation type="journal article" date="2007" name="Theor. Appl. Genet.">
        <title>Complete chloroplast genome sequences of Hordeum vulgare, Sorghum bicolor and Agrostis stolonifera, and comparative analyses with other grass genomes.</title>
        <authorList>
            <person name="Saski C."/>
            <person name="Lee S.-B."/>
            <person name="Fjellheim S."/>
            <person name="Guda C."/>
            <person name="Jansen R.K."/>
            <person name="Luo H."/>
            <person name="Tomkins J."/>
            <person name="Rognli O.A."/>
            <person name="Daniell H."/>
            <person name="Clarke J.L."/>
        </authorList>
    </citation>
    <scope>NUCLEOTIDE SEQUENCE [LARGE SCALE GENOMIC DNA]</scope>
    <source>
        <strain>cv. Morex</strain>
    </source>
</reference>
<reference key="2">
    <citation type="journal article" date="2009" name="Proteomics">
        <title>Mass spectrometric characterization of membrane integral low molecular weight proteins from photosystem II in barley etioplasts.</title>
        <authorList>
            <person name="Ploescher M."/>
            <person name="Granvogl B."/>
            <person name="Zoryan M."/>
            <person name="Reisinger V."/>
            <person name="Eichacker L.A."/>
        </authorList>
    </citation>
    <scope>FUNCTION</scope>
    <scope>IDENTIFICATION BY MASS SPECTROMETRY</scope>
    <scope>SUBCELLULAR LOCATION</scope>
    <source>
        <strain>cv. Steffi</strain>
    </source>
</reference>
<evidence type="ECO:0000255" key="1">
    <source>
        <dbReference type="HAMAP-Rule" id="MF_00293"/>
    </source>
</evidence>
<evidence type="ECO:0000269" key="2">
    <source>
    </source>
</evidence>
<evidence type="ECO:0000305" key="3"/>
<evidence type="ECO:0000305" key="4">
    <source>
    </source>
</evidence>
<dbReference type="EMBL" id="EF115541">
    <property type="protein sequence ID" value="ABK79439.1"/>
    <property type="molecule type" value="Genomic_DNA"/>
</dbReference>
<dbReference type="RefSeq" id="YP_010144452.1">
    <property type="nucleotide sequence ID" value="NC_056985.1"/>
</dbReference>
<dbReference type="RefSeq" id="YP_874680.1">
    <property type="nucleotide sequence ID" value="NC_008590.1"/>
</dbReference>
<dbReference type="SMR" id="A1E9L8"/>
<dbReference type="GeneID" id="4525077"/>
<dbReference type="GeneID" id="67140663"/>
<dbReference type="GO" id="GO:0031969">
    <property type="term" value="C:chloroplast membrane"/>
    <property type="evidence" value="ECO:0007669"/>
    <property type="project" value="UniProtKB-SubCell"/>
</dbReference>
<dbReference type="GO" id="GO:0009535">
    <property type="term" value="C:chloroplast thylakoid membrane"/>
    <property type="evidence" value="ECO:0007669"/>
    <property type="project" value="UniProtKB-UniRule"/>
</dbReference>
<dbReference type="GO" id="GO:0034426">
    <property type="term" value="C:etioplast membrane"/>
    <property type="evidence" value="ECO:0007669"/>
    <property type="project" value="UniProtKB-SubCell"/>
</dbReference>
<dbReference type="GO" id="GO:0015979">
    <property type="term" value="P:photosynthesis"/>
    <property type="evidence" value="ECO:0007669"/>
    <property type="project" value="InterPro"/>
</dbReference>
<dbReference type="HAMAP" id="MF_00293">
    <property type="entry name" value="PSII_PsbN"/>
    <property type="match status" value="1"/>
</dbReference>
<dbReference type="InterPro" id="IPR003398">
    <property type="entry name" value="PSII_PsbN"/>
</dbReference>
<dbReference type="PANTHER" id="PTHR35326">
    <property type="entry name" value="PROTEIN PSBN"/>
    <property type="match status" value="1"/>
</dbReference>
<dbReference type="PANTHER" id="PTHR35326:SF3">
    <property type="entry name" value="PROTEIN PSBN"/>
    <property type="match status" value="1"/>
</dbReference>
<dbReference type="Pfam" id="PF02468">
    <property type="entry name" value="PsbN"/>
    <property type="match status" value="1"/>
</dbReference>
<gene>
    <name evidence="1" type="primary">psbN</name>
</gene>
<proteinExistence type="evidence at protein level"/>
<feature type="chain" id="PRO_0000362195" description="Protein PsbN">
    <location>
        <begin position="1"/>
        <end position="43"/>
    </location>
</feature>
<feature type="transmembrane region" description="Helical" evidence="1">
    <location>
        <begin position="5"/>
        <end position="27"/>
    </location>
</feature>
<accession>A1E9L8</accession>
<organism>
    <name type="scientific">Hordeum vulgare</name>
    <name type="common">Barley</name>
    <dbReference type="NCBI Taxonomy" id="4513"/>
    <lineage>
        <taxon>Eukaryota</taxon>
        <taxon>Viridiplantae</taxon>
        <taxon>Streptophyta</taxon>
        <taxon>Embryophyta</taxon>
        <taxon>Tracheophyta</taxon>
        <taxon>Spermatophyta</taxon>
        <taxon>Magnoliopsida</taxon>
        <taxon>Liliopsida</taxon>
        <taxon>Poales</taxon>
        <taxon>Poaceae</taxon>
        <taxon>BOP clade</taxon>
        <taxon>Pooideae</taxon>
        <taxon>Triticodae</taxon>
        <taxon>Triticeae</taxon>
        <taxon>Hordeinae</taxon>
        <taxon>Hordeum</taxon>
    </lineage>
</organism>
<protein>
    <recommendedName>
        <fullName evidence="1">Protein PsbN</fullName>
    </recommendedName>
</protein>
<name>PSBN_HORVU</name>
<sequence>METATLVAISISGLLVSFTGYALYTAFGQPSQQLRDPFEEHGD</sequence>
<comment type="function">
    <text evidence="1 4">May play a role in photosystem I and II biogenesis.</text>
</comment>
<comment type="subcellular location">
    <subcellularLocation>
        <location evidence="3">Plastid</location>
        <location evidence="3">Chloroplast membrane</location>
    </subcellularLocation>
    <subcellularLocation>
        <location evidence="4">Plastid</location>
        <location evidence="4">Etioplast membrane</location>
        <topology evidence="1 4">Single-pass membrane protein</topology>
    </subcellularLocation>
    <text evidence="2">Detected only in etioplasts and not in chloroplasts from green leaves; PSII is only assembled in green leaves, suggesting this protein is not a component of PSII.</text>
</comment>
<comment type="similarity">
    <text evidence="1">Belongs to the PsbN family.</text>
</comment>
<comment type="caution">
    <text evidence="1 4">Originally thought to be a component of PSII; based on experiments in this organism, Synechocystis and N.tabacum, and its absence from PSII in T.elongatus and T.vulcanus, this is probably not true.</text>
</comment>